<proteinExistence type="inferred from homology"/>
<evidence type="ECO:0000255" key="1">
    <source>
        <dbReference type="HAMAP-Rule" id="MF_00061"/>
    </source>
</evidence>
<reference key="1">
    <citation type="journal article" date="2011" name="Appl. Environ. Microbiol.">
        <title>Genomic potential of Marinobacter aquaeolei, a biogeochemical 'opportunitroph'.</title>
        <authorList>
            <person name="Singer E."/>
            <person name="Webb E.A."/>
            <person name="Nelson W.C."/>
            <person name="Heidelberg J.F."/>
            <person name="Ivanova N."/>
            <person name="Pati A."/>
            <person name="Edwards K.J."/>
        </authorList>
    </citation>
    <scope>NUCLEOTIDE SEQUENCE [LARGE SCALE GENOMIC DNA]</scope>
    <source>
        <strain>ATCC 700491 / DSM 11845 / VT8</strain>
    </source>
</reference>
<dbReference type="EC" id="2.7.1.148" evidence="1"/>
<dbReference type="EMBL" id="CP000514">
    <property type="protein sequence ID" value="ABM19440.1"/>
    <property type="molecule type" value="Genomic_DNA"/>
</dbReference>
<dbReference type="RefSeq" id="WP_011785827.1">
    <property type="nucleotide sequence ID" value="NC_008740.1"/>
</dbReference>
<dbReference type="SMR" id="A1U371"/>
<dbReference type="STRING" id="351348.Maqu_2364"/>
<dbReference type="KEGG" id="maq:Maqu_2364"/>
<dbReference type="eggNOG" id="COG1947">
    <property type="taxonomic scope" value="Bacteria"/>
</dbReference>
<dbReference type="HOGENOM" id="CLU_053057_3_0_6"/>
<dbReference type="OrthoDB" id="9809438at2"/>
<dbReference type="UniPathway" id="UPA00056">
    <property type="reaction ID" value="UER00094"/>
</dbReference>
<dbReference type="Proteomes" id="UP000000998">
    <property type="component" value="Chromosome"/>
</dbReference>
<dbReference type="GO" id="GO:0050515">
    <property type="term" value="F:4-(cytidine 5'-diphospho)-2-C-methyl-D-erythritol kinase activity"/>
    <property type="evidence" value="ECO:0007669"/>
    <property type="project" value="UniProtKB-UniRule"/>
</dbReference>
<dbReference type="GO" id="GO:0005524">
    <property type="term" value="F:ATP binding"/>
    <property type="evidence" value="ECO:0007669"/>
    <property type="project" value="UniProtKB-UniRule"/>
</dbReference>
<dbReference type="GO" id="GO:0019288">
    <property type="term" value="P:isopentenyl diphosphate biosynthetic process, methylerythritol 4-phosphate pathway"/>
    <property type="evidence" value="ECO:0007669"/>
    <property type="project" value="UniProtKB-UniRule"/>
</dbReference>
<dbReference type="GO" id="GO:0016114">
    <property type="term" value="P:terpenoid biosynthetic process"/>
    <property type="evidence" value="ECO:0007669"/>
    <property type="project" value="InterPro"/>
</dbReference>
<dbReference type="Gene3D" id="3.30.230.10">
    <property type="match status" value="1"/>
</dbReference>
<dbReference type="Gene3D" id="3.30.70.890">
    <property type="entry name" value="GHMP kinase, C-terminal domain"/>
    <property type="match status" value="1"/>
</dbReference>
<dbReference type="HAMAP" id="MF_00061">
    <property type="entry name" value="IspE"/>
    <property type="match status" value="1"/>
</dbReference>
<dbReference type="InterPro" id="IPR013750">
    <property type="entry name" value="GHMP_kinase_C_dom"/>
</dbReference>
<dbReference type="InterPro" id="IPR036554">
    <property type="entry name" value="GHMP_kinase_C_sf"/>
</dbReference>
<dbReference type="InterPro" id="IPR006204">
    <property type="entry name" value="GHMP_kinase_N_dom"/>
</dbReference>
<dbReference type="InterPro" id="IPR004424">
    <property type="entry name" value="IspE"/>
</dbReference>
<dbReference type="InterPro" id="IPR020568">
    <property type="entry name" value="Ribosomal_Su5_D2-typ_SF"/>
</dbReference>
<dbReference type="InterPro" id="IPR014721">
    <property type="entry name" value="Ribsml_uS5_D2-typ_fold_subgr"/>
</dbReference>
<dbReference type="NCBIfam" id="TIGR00154">
    <property type="entry name" value="ispE"/>
    <property type="match status" value="1"/>
</dbReference>
<dbReference type="PANTHER" id="PTHR43527">
    <property type="entry name" value="4-DIPHOSPHOCYTIDYL-2-C-METHYL-D-ERYTHRITOL KINASE, CHLOROPLASTIC"/>
    <property type="match status" value="1"/>
</dbReference>
<dbReference type="PANTHER" id="PTHR43527:SF2">
    <property type="entry name" value="4-DIPHOSPHOCYTIDYL-2-C-METHYL-D-ERYTHRITOL KINASE, CHLOROPLASTIC"/>
    <property type="match status" value="1"/>
</dbReference>
<dbReference type="Pfam" id="PF08544">
    <property type="entry name" value="GHMP_kinases_C"/>
    <property type="match status" value="1"/>
</dbReference>
<dbReference type="Pfam" id="PF00288">
    <property type="entry name" value="GHMP_kinases_N"/>
    <property type="match status" value="1"/>
</dbReference>
<dbReference type="PIRSF" id="PIRSF010376">
    <property type="entry name" value="IspE"/>
    <property type="match status" value="1"/>
</dbReference>
<dbReference type="SUPFAM" id="SSF55060">
    <property type="entry name" value="GHMP Kinase, C-terminal domain"/>
    <property type="match status" value="1"/>
</dbReference>
<dbReference type="SUPFAM" id="SSF54211">
    <property type="entry name" value="Ribosomal protein S5 domain 2-like"/>
    <property type="match status" value="1"/>
</dbReference>
<sequence>MLTRITLPSPAKLNLFLHIVGRRPDGYHELQTLFQFLDYGDELTFTLTPEQPGIRLAEPVPGVPDSDNLVIRAAKALAATTENTLPGVTIHIHKRLPMGGGLGGGSSNAATTLLAMNRLWELNLCEDQLAEIGLRLGADVPVFVRGHAAFGEGVGEKLTPTNPPEDWFVVLKPECNISTGKIFSAEGLTRDTPKIKIRPAFEGDASRYRNDCEDVVRKLYPEVNQSLEWLSQFGPARLTGTGACIFGRFPTESAARIIWESKPSGITGFVAKGVNHSPLHKKLTELK</sequence>
<organism>
    <name type="scientific">Marinobacter nauticus (strain ATCC 700491 / DSM 11845 / VT8)</name>
    <name type="common">Marinobacter aquaeolei</name>
    <dbReference type="NCBI Taxonomy" id="351348"/>
    <lineage>
        <taxon>Bacteria</taxon>
        <taxon>Pseudomonadati</taxon>
        <taxon>Pseudomonadota</taxon>
        <taxon>Gammaproteobacteria</taxon>
        <taxon>Pseudomonadales</taxon>
        <taxon>Marinobacteraceae</taxon>
        <taxon>Marinobacter</taxon>
    </lineage>
</organism>
<accession>A1U371</accession>
<keyword id="KW-0067">ATP-binding</keyword>
<keyword id="KW-0414">Isoprene biosynthesis</keyword>
<keyword id="KW-0418">Kinase</keyword>
<keyword id="KW-0547">Nucleotide-binding</keyword>
<keyword id="KW-0808">Transferase</keyword>
<feature type="chain" id="PRO_1000057423" description="4-diphosphocytidyl-2-C-methyl-D-erythritol kinase">
    <location>
        <begin position="1"/>
        <end position="287"/>
    </location>
</feature>
<feature type="active site" evidence="1">
    <location>
        <position position="12"/>
    </location>
</feature>
<feature type="active site" evidence="1">
    <location>
        <position position="139"/>
    </location>
</feature>
<feature type="binding site" evidence="1">
    <location>
        <begin position="97"/>
        <end position="107"/>
    </location>
    <ligand>
        <name>ATP</name>
        <dbReference type="ChEBI" id="CHEBI:30616"/>
    </ligand>
</feature>
<gene>
    <name evidence="1" type="primary">ispE</name>
    <name type="ordered locus">Maqu_2364</name>
</gene>
<name>ISPE_MARN8</name>
<comment type="function">
    <text evidence="1">Catalyzes the phosphorylation of the position 2 hydroxy group of 4-diphosphocytidyl-2C-methyl-D-erythritol.</text>
</comment>
<comment type="catalytic activity">
    <reaction evidence="1">
        <text>4-CDP-2-C-methyl-D-erythritol + ATP = 4-CDP-2-C-methyl-D-erythritol 2-phosphate + ADP + H(+)</text>
        <dbReference type="Rhea" id="RHEA:18437"/>
        <dbReference type="ChEBI" id="CHEBI:15378"/>
        <dbReference type="ChEBI" id="CHEBI:30616"/>
        <dbReference type="ChEBI" id="CHEBI:57823"/>
        <dbReference type="ChEBI" id="CHEBI:57919"/>
        <dbReference type="ChEBI" id="CHEBI:456216"/>
        <dbReference type="EC" id="2.7.1.148"/>
    </reaction>
</comment>
<comment type="pathway">
    <text evidence="1">Isoprenoid biosynthesis; isopentenyl diphosphate biosynthesis via DXP pathway; isopentenyl diphosphate from 1-deoxy-D-xylulose 5-phosphate: step 3/6.</text>
</comment>
<comment type="similarity">
    <text evidence="1">Belongs to the GHMP kinase family. IspE subfamily.</text>
</comment>
<protein>
    <recommendedName>
        <fullName evidence="1">4-diphosphocytidyl-2-C-methyl-D-erythritol kinase</fullName>
        <shortName evidence="1">CMK</shortName>
        <ecNumber evidence="1">2.7.1.148</ecNumber>
    </recommendedName>
    <alternativeName>
        <fullName evidence="1">4-(cytidine-5'-diphospho)-2-C-methyl-D-erythritol kinase</fullName>
    </alternativeName>
</protein>